<sequence>MSLTEEIKKRRTFAIISHPDAGKTTITEQLLYFGGEIREAGTVKGKKSGTFAKSDWMDIEKQRGISVTSSVMQFDYAGKRVNILDTPGHEDFSEDTYRTLMAVDAAVMVVDSAKGIEAQTKKLFEVVKHRNIPVFTFINKLDRDGREPLELLEELEEVLGIASYPMNWPIGMGRAFEGLYDLHNKRLELYKGDERFASIEDGDQLFANNPFYEQVKEDIELLQEAGNDFSEQAILDGDLTPVFFGSALTNFGVQTFLDTFLEFAPEPHGHKTTEGNVVDPLAKDFSGFVFKIQANMDPKHRDRIAFVRIVSGEFERGMGVNLTRTGKGAKLSNVTQFMAESRENVTNAVAGDIIGVYDTGTYQVGDTLTVGKNKFEFEPLPTFTPEIFMKVSPKNVMKQKSFHKGIEQLVQEGAIQLYKNYQTGEYMLGAVGQLQFEVFKHRMEGEYNAEVVMTPMGKKTVRWISEDDLDQRMSSSRNILAKDRFDQPVFLFENDFALRWFADKYPDVTLEEKM</sequence>
<dbReference type="EMBL" id="CP000262">
    <property type="protein sequence ID" value="ABF38212.1"/>
    <property type="molecule type" value="Genomic_DNA"/>
</dbReference>
<dbReference type="SMR" id="Q1J5X1"/>
<dbReference type="KEGG" id="spi:MGAS10750_Spy1263"/>
<dbReference type="HOGENOM" id="CLU_002794_2_1_9"/>
<dbReference type="Proteomes" id="UP000002434">
    <property type="component" value="Chromosome"/>
</dbReference>
<dbReference type="GO" id="GO:0005829">
    <property type="term" value="C:cytosol"/>
    <property type="evidence" value="ECO:0007669"/>
    <property type="project" value="TreeGrafter"/>
</dbReference>
<dbReference type="GO" id="GO:0005525">
    <property type="term" value="F:GTP binding"/>
    <property type="evidence" value="ECO:0007669"/>
    <property type="project" value="UniProtKB-UniRule"/>
</dbReference>
<dbReference type="GO" id="GO:0003924">
    <property type="term" value="F:GTPase activity"/>
    <property type="evidence" value="ECO:0007669"/>
    <property type="project" value="InterPro"/>
</dbReference>
<dbReference type="GO" id="GO:0016150">
    <property type="term" value="F:translation release factor activity, codon nonspecific"/>
    <property type="evidence" value="ECO:0007669"/>
    <property type="project" value="TreeGrafter"/>
</dbReference>
<dbReference type="GO" id="GO:0016149">
    <property type="term" value="F:translation release factor activity, codon specific"/>
    <property type="evidence" value="ECO:0007669"/>
    <property type="project" value="UniProtKB-UniRule"/>
</dbReference>
<dbReference type="GO" id="GO:0006449">
    <property type="term" value="P:regulation of translational termination"/>
    <property type="evidence" value="ECO:0007669"/>
    <property type="project" value="UniProtKB-UniRule"/>
</dbReference>
<dbReference type="CDD" id="cd04169">
    <property type="entry name" value="RF3"/>
    <property type="match status" value="1"/>
</dbReference>
<dbReference type="CDD" id="cd16259">
    <property type="entry name" value="RF3_III"/>
    <property type="match status" value="1"/>
</dbReference>
<dbReference type="FunFam" id="2.40.30.10:FF:000040">
    <property type="entry name" value="Peptide chain release factor 3"/>
    <property type="match status" value="1"/>
</dbReference>
<dbReference type="FunFam" id="3.30.70.3280:FF:000001">
    <property type="entry name" value="Peptide chain release factor 3"/>
    <property type="match status" value="1"/>
</dbReference>
<dbReference type="FunFam" id="3.40.50.300:FF:000542">
    <property type="entry name" value="Peptide chain release factor 3"/>
    <property type="match status" value="1"/>
</dbReference>
<dbReference type="Gene3D" id="3.40.50.300">
    <property type="entry name" value="P-loop containing nucleotide triphosphate hydrolases"/>
    <property type="match status" value="1"/>
</dbReference>
<dbReference type="Gene3D" id="3.30.70.3280">
    <property type="entry name" value="Peptide chain release factor 3, domain III"/>
    <property type="match status" value="1"/>
</dbReference>
<dbReference type="Gene3D" id="2.40.30.10">
    <property type="entry name" value="Translation factors"/>
    <property type="match status" value="1"/>
</dbReference>
<dbReference type="HAMAP" id="MF_00072">
    <property type="entry name" value="Rel_fac_3"/>
    <property type="match status" value="1"/>
</dbReference>
<dbReference type="InterPro" id="IPR053905">
    <property type="entry name" value="EF-G-like_DII"/>
</dbReference>
<dbReference type="InterPro" id="IPR035647">
    <property type="entry name" value="EFG_III/V"/>
</dbReference>
<dbReference type="InterPro" id="IPR031157">
    <property type="entry name" value="G_TR_CS"/>
</dbReference>
<dbReference type="InterPro" id="IPR027417">
    <property type="entry name" value="P-loop_NTPase"/>
</dbReference>
<dbReference type="InterPro" id="IPR004548">
    <property type="entry name" value="PrfC"/>
</dbReference>
<dbReference type="InterPro" id="IPR032090">
    <property type="entry name" value="RF3_C"/>
</dbReference>
<dbReference type="InterPro" id="IPR038467">
    <property type="entry name" value="RF3_dom_3_sf"/>
</dbReference>
<dbReference type="InterPro" id="IPR041732">
    <property type="entry name" value="RF3_GTP-bd"/>
</dbReference>
<dbReference type="InterPro" id="IPR005225">
    <property type="entry name" value="Small_GTP-bd"/>
</dbReference>
<dbReference type="InterPro" id="IPR000795">
    <property type="entry name" value="T_Tr_GTP-bd_dom"/>
</dbReference>
<dbReference type="InterPro" id="IPR009000">
    <property type="entry name" value="Transl_B-barrel_sf"/>
</dbReference>
<dbReference type="NCBIfam" id="TIGR00503">
    <property type="entry name" value="prfC"/>
    <property type="match status" value="1"/>
</dbReference>
<dbReference type="NCBIfam" id="NF001964">
    <property type="entry name" value="PRK00741.1"/>
    <property type="match status" value="1"/>
</dbReference>
<dbReference type="NCBIfam" id="TIGR00231">
    <property type="entry name" value="small_GTP"/>
    <property type="match status" value="1"/>
</dbReference>
<dbReference type="PANTHER" id="PTHR43556">
    <property type="entry name" value="PEPTIDE CHAIN RELEASE FACTOR RF3"/>
    <property type="match status" value="1"/>
</dbReference>
<dbReference type="PANTHER" id="PTHR43556:SF2">
    <property type="entry name" value="PEPTIDE CHAIN RELEASE FACTOR RF3"/>
    <property type="match status" value="1"/>
</dbReference>
<dbReference type="Pfam" id="PF22042">
    <property type="entry name" value="EF-G_D2"/>
    <property type="match status" value="1"/>
</dbReference>
<dbReference type="Pfam" id="PF00009">
    <property type="entry name" value="GTP_EFTU"/>
    <property type="match status" value="1"/>
</dbReference>
<dbReference type="Pfam" id="PF16658">
    <property type="entry name" value="RF3_C"/>
    <property type="match status" value="1"/>
</dbReference>
<dbReference type="PRINTS" id="PR00315">
    <property type="entry name" value="ELONGATNFCT"/>
</dbReference>
<dbReference type="PRINTS" id="PR01037">
    <property type="entry name" value="TCRTETOQM"/>
</dbReference>
<dbReference type="SUPFAM" id="SSF54980">
    <property type="entry name" value="EF-G C-terminal domain-like"/>
    <property type="match status" value="1"/>
</dbReference>
<dbReference type="SUPFAM" id="SSF52540">
    <property type="entry name" value="P-loop containing nucleoside triphosphate hydrolases"/>
    <property type="match status" value="1"/>
</dbReference>
<dbReference type="SUPFAM" id="SSF50447">
    <property type="entry name" value="Translation proteins"/>
    <property type="match status" value="1"/>
</dbReference>
<dbReference type="PROSITE" id="PS00301">
    <property type="entry name" value="G_TR_1"/>
    <property type="match status" value="1"/>
</dbReference>
<dbReference type="PROSITE" id="PS51722">
    <property type="entry name" value="G_TR_2"/>
    <property type="match status" value="1"/>
</dbReference>
<keyword id="KW-0963">Cytoplasm</keyword>
<keyword id="KW-0342">GTP-binding</keyword>
<keyword id="KW-0547">Nucleotide-binding</keyword>
<keyword id="KW-0648">Protein biosynthesis</keyword>
<name>RF3_STRPF</name>
<proteinExistence type="inferred from homology"/>
<comment type="function">
    <text evidence="1">Increases the formation of ribosomal termination complexes and stimulates activities of RF-1 and RF-2. It binds guanine nucleotides and has strong preference for UGA stop codons. It may interact directly with the ribosome. The stimulation of RF-1 and RF-2 is significantly reduced by GTP and GDP, but not by GMP.</text>
</comment>
<comment type="subcellular location">
    <subcellularLocation>
        <location evidence="1">Cytoplasm</location>
    </subcellularLocation>
</comment>
<comment type="similarity">
    <text evidence="1">Belongs to the TRAFAC class translation factor GTPase superfamily. Classic translation factor GTPase family. PrfC subfamily.</text>
</comment>
<reference key="1">
    <citation type="journal article" date="2006" name="Proc. Natl. Acad. Sci. U.S.A.">
        <title>Molecular genetic anatomy of inter- and intraserotype variation in the human bacterial pathogen group A Streptococcus.</title>
        <authorList>
            <person name="Beres S.B."/>
            <person name="Richter E.W."/>
            <person name="Nagiec M.J."/>
            <person name="Sumby P."/>
            <person name="Porcella S.F."/>
            <person name="DeLeo F.R."/>
            <person name="Musser J.M."/>
        </authorList>
    </citation>
    <scope>NUCLEOTIDE SEQUENCE [LARGE SCALE GENOMIC DNA]</scope>
    <source>
        <strain>MGAS10750</strain>
    </source>
</reference>
<evidence type="ECO:0000255" key="1">
    <source>
        <dbReference type="HAMAP-Rule" id="MF_00072"/>
    </source>
</evidence>
<organism>
    <name type="scientific">Streptococcus pyogenes serotype M4 (strain MGAS10750)</name>
    <dbReference type="NCBI Taxonomy" id="370554"/>
    <lineage>
        <taxon>Bacteria</taxon>
        <taxon>Bacillati</taxon>
        <taxon>Bacillota</taxon>
        <taxon>Bacilli</taxon>
        <taxon>Lactobacillales</taxon>
        <taxon>Streptococcaceae</taxon>
        <taxon>Streptococcus</taxon>
    </lineage>
</organism>
<gene>
    <name evidence="1" type="primary">prfC</name>
    <name type="ordered locus">MGAS10750_Spy1263</name>
</gene>
<accession>Q1J5X1</accession>
<feature type="chain" id="PRO_1000023688" description="Peptide chain release factor 3">
    <location>
        <begin position="1"/>
        <end position="514"/>
    </location>
</feature>
<feature type="domain" description="tr-type G">
    <location>
        <begin position="8"/>
        <end position="268"/>
    </location>
</feature>
<feature type="binding site" evidence="1">
    <location>
        <begin position="17"/>
        <end position="24"/>
    </location>
    <ligand>
        <name>GTP</name>
        <dbReference type="ChEBI" id="CHEBI:37565"/>
    </ligand>
</feature>
<feature type="binding site" evidence="1">
    <location>
        <begin position="85"/>
        <end position="89"/>
    </location>
    <ligand>
        <name>GTP</name>
        <dbReference type="ChEBI" id="CHEBI:37565"/>
    </ligand>
</feature>
<feature type="binding site" evidence="1">
    <location>
        <begin position="139"/>
        <end position="142"/>
    </location>
    <ligand>
        <name>GTP</name>
        <dbReference type="ChEBI" id="CHEBI:37565"/>
    </ligand>
</feature>
<protein>
    <recommendedName>
        <fullName evidence="1">Peptide chain release factor 3</fullName>
        <shortName evidence="1">RF-3</shortName>
    </recommendedName>
</protein>